<evidence type="ECO:0000250" key="1">
    <source>
        <dbReference type="UniProtKB" id="Q9LD14"/>
    </source>
</evidence>
<evidence type="ECO:0000305" key="2"/>
<dbReference type="EC" id="1.3.1.-"/>
<dbReference type="EMBL" id="U48590">
    <property type="protein sequence ID" value="AAB67729.1"/>
    <property type="molecule type" value="mRNA"/>
</dbReference>
<dbReference type="PIR" id="T11035">
    <property type="entry name" value="T11035"/>
</dbReference>
<dbReference type="SMR" id="P52581"/>
<dbReference type="GO" id="GO:0010283">
    <property type="term" value="F:pinoresinol reductase activity"/>
    <property type="evidence" value="ECO:0007669"/>
    <property type="project" value="UniProtKB-ARBA"/>
</dbReference>
<dbReference type="GO" id="GO:0009807">
    <property type="term" value="P:lignan biosynthetic process"/>
    <property type="evidence" value="ECO:0007669"/>
    <property type="project" value="UniProtKB-ARBA"/>
</dbReference>
<dbReference type="CDD" id="cd05259">
    <property type="entry name" value="PCBER_SDR_a"/>
    <property type="match status" value="1"/>
</dbReference>
<dbReference type="Gene3D" id="3.40.50.720">
    <property type="entry name" value="NAD(P)-binding Rossmann-like Domain"/>
    <property type="match status" value="1"/>
</dbReference>
<dbReference type="Gene3D" id="3.90.25.10">
    <property type="entry name" value="UDP-galactose 4-epimerase, domain 1"/>
    <property type="match status" value="1"/>
</dbReference>
<dbReference type="InterPro" id="IPR036291">
    <property type="entry name" value="NAD(P)-bd_dom_sf"/>
</dbReference>
<dbReference type="InterPro" id="IPR008030">
    <property type="entry name" value="NmrA-like"/>
</dbReference>
<dbReference type="InterPro" id="IPR050608">
    <property type="entry name" value="NmrA-type/Isoflavone_red_sf"/>
</dbReference>
<dbReference type="InterPro" id="IPR045312">
    <property type="entry name" value="PCBER-like"/>
</dbReference>
<dbReference type="PANTHER" id="PTHR43349:SF4">
    <property type="entry name" value="PINORESINOL REDUCTASE 1-RELATED"/>
    <property type="match status" value="1"/>
</dbReference>
<dbReference type="PANTHER" id="PTHR43349">
    <property type="entry name" value="PINORESINOL REDUCTASE-RELATED"/>
    <property type="match status" value="1"/>
</dbReference>
<dbReference type="Pfam" id="PF05368">
    <property type="entry name" value="NmrA"/>
    <property type="match status" value="1"/>
</dbReference>
<dbReference type="SUPFAM" id="SSF51735">
    <property type="entry name" value="NAD(P)-binding Rossmann-fold domains"/>
    <property type="match status" value="1"/>
</dbReference>
<accession>P52581</accession>
<reference key="1">
    <citation type="online journal article" date="1996" name="Plant Gene Register">
        <title>A cDNA clone encoding an isoflavone reductase-like protein from white lupin.</title>
        <authorList>
            <person name="Attucci S."/>
            <person name="Aitken S.M."/>
            <person name="Ibrahim R.K."/>
            <person name="Gulick P.J."/>
        </authorList>
        <locator>PGR96-012</locator>
    </citation>
    <scope>NUCLEOTIDE SEQUENCE [MRNA]</scope>
    <source>
        <strain>cv. Primovski</strain>
        <tissue>Root</tissue>
    </source>
</reference>
<comment type="similarity">
    <text evidence="2">Belongs to the NmrA-type oxidoreductase family. Isoflavone reductase subfamily.</text>
</comment>
<organism>
    <name type="scientific">Lupinus albus</name>
    <name type="common">White lupine</name>
    <name type="synonym">Lupinus termis</name>
    <dbReference type="NCBI Taxonomy" id="3870"/>
    <lineage>
        <taxon>Eukaryota</taxon>
        <taxon>Viridiplantae</taxon>
        <taxon>Streptophyta</taxon>
        <taxon>Embryophyta</taxon>
        <taxon>Tracheophyta</taxon>
        <taxon>Spermatophyta</taxon>
        <taxon>Magnoliopsida</taxon>
        <taxon>eudicotyledons</taxon>
        <taxon>Gunneridae</taxon>
        <taxon>Pentapetalae</taxon>
        <taxon>rosids</taxon>
        <taxon>fabids</taxon>
        <taxon>Fabales</taxon>
        <taxon>Fabaceae</taxon>
        <taxon>Papilionoideae</taxon>
        <taxon>50 kb inversion clade</taxon>
        <taxon>genistoids sensu lato</taxon>
        <taxon>core genistoids</taxon>
        <taxon>Genisteae</taxon>
        <taxon>Lupinus</taxon>
    </lineage>
</organism>
<sequence>MGKSKVLVVGGTGYVGRRIVKASLEHGHETFILQRPEIGLDIEKLQILLSFKKQGAILVEASFSDHKSLVDAVKLVDVVICTMSGVHFRSHNLLTQLKLVEAIKDAGNIKRFLPSEFGMDPALMGHALEPGRVTFDEKMTVRKAIEEANIPFTYISANCFAGYFAGNLSQMKTLLPPRDKVLLYGDGNVKPVYMDEDDVATYTIKTIDDPRTLNKTVYLRPPENILTHKELIEKWEELIGKQLEKNSISEKDFLSTLKGLDFASQVGVGHFYHIFYEGCLTNFEIGENGEEASELYPEVNYTRMDQYLKVYV</sequence>
<feature type="chain" id="PRO_0000204552" description="Isoflavone reductase homolog">
    <location>
        <begin position="1"/>
        <end position="312"/>
    </location>
</feature>
<feature type="active site" description="Proton acceptor" evidence="1">
    <location>
        <position position="138"/>
    </location>
</feature>
<feature type="binding site" evidence="1">
    <location>
        <begin position="10"/>
        <end position="16"/>
    </location>
    <ligand>
        <name>NADP(+)</name>
        <dbReference type="ChEBI" id="CHEBI:58349"/>
    </ligand>
</feature>
<feature type="binding site" evidence="1">
    <location>
        <position position="35"/>
    </location>
    <ligand>
        <name>NADP(+)</name>
        <dbReference type="ChEBI" id="CHEBI:58349"/>
    </ligand>
</feature>
<feature type="binding site" evidence="1">
    <location>
        <position position="44"/>
    </location>
    <ligand>
        <name>NADP(+)</name>
        <dbReference type="ChEBI" id="CHEBI:58349"/>
    </ligand>
</feature>
<feature type="binding site" evidence="1">
    <location>
        <position position="142"/>
    </location>
    <ligand>
        <name>NADP(+)</name>
        <dbReference type="ChEBI" id="CHEBI:58349"/>
    </ligand>
</feature>
<feature type="binding site" evidence="1">
    <location>
        <position position="270"/>
    </location>
    <ligand>
        <name>substrate</name>
    </ligand>
</feature>
<keyword id="KW-0521">NADP</keyword>
<keyword id="KW-0560">Oxidoreductase</keyword>
<protein>
    <recommendedName>
        <fullName>Isoflavone reductase homolog</fullName>
        <ecNumber>1.3.1.-</ecNumber>
    </recommendedName>
</protein>
<proteinExistence type="evidence at transcript level"/>
<name>IFRH_LUPAL</name>